<reference key="1">
    <citation type="submission" date="2007-10" db="EMBL/GenBank/DDBJ databases">
        <title>Complete sequence of Desulfococcus oleovorans Hxd3.</title>
        <authorList>
            <consortium name="US DOE Joint Genome Institute"/>
            <person name="Copeland A."/>
            <person name="Lucas S."/>
            <person name="Lapidus A."/>
            <person name="Barry K."/>
            <person name="Glavina del Rio T."/>
            <person name="Dalin E."/>
            <person name="Tice H."/>
            <person name="Pitluck S."/>
            <person name="Kiss H."/>
            <person name="Brettin T."/>
            <person name="Bruce D."/>
            <person name="Detter J.C."/>
            <person name="Han C."/>
            <person name="Schmutz J."/>
            <person name="Larimer F."/>
            <person name="Land M."/>
            <person name="Hauser L."/>
            <person name="Kyrpides N."/>
            <person name="Kim E."/>
            <person name="Wawrik B."/>
            <person name="Richardson P."/>
        </authorList>
    </citation>
    <scope>NUCLEOTIDE SEQUENCE [LARGE SCALE GENOMIC DNA]</scope>
    <source>
        <strain>DSM 6200 / JCM 39069 / Hxd3</strain>
    </source>
</reference>
<evidence type="ECO:0000255" key="1">
    <source>
        <dbReference type="HAMAP-Rule" id="MF_00016"/>
    </source>
</evidence>
<evidence type="ECO:0000256" key="2">
    <source>
        <dbReference type="SAM" id="MobiDB-lite"/>
    </source>
</evidence>
<organism>
    <name type="scientific">Desulfosudis oleivorans (strain DSM 6200 / JCM 39069 / Hxd3)</name>
    <name type="common">Desulfococcus oleovorans</name>
    <dbReference type="NCBI Taxonomy" id="96561"/>
    <lineage>
        <taxon>Bacteria</taxon>
        <taxon>Pseudomonadati</taxon>
        <taxon>Thermodesulfobacteriota</taxon>
        <taxon>Desulfobacteria</taxon>
        <taxon>Desulfobacterales</taxon>
        <taxon>Desulfosudaceae</taxon>
        <taxon>Desulfosudis</taxon>
    </lineage>
</organism>
<keyword id="KW-0067">ATP-binding</keyword>
<keyword id="KW-0963">Cytoplasm</keyword>
<keyword id="KW-0227">DNA damage</keyword>
<keyword id="KW-0233">DNA recombination</keyword>
<keyword id="KW-0234">DNA repair</keyword>
<keyword id="KW-0238">DNA-binding</keyword>
<keyword id="KW-0378">Hydrolase</keyword>
<keyword id="KW-0547">Nucleotide-binding</keyword>
<keyword id="KW-1185">Reference proteome</keyword>
<sequence>MKEKILTFSSDPSSPVTRHETEEDTGDDLFSLRPCDFEDYVGQDRTVETLRIAIAAAKQRSEPLEHVLFHGPPGLGKTTLAHIIAAEMGTSLTITSGPALEKGGDLIGMLTHLKRGDILFVDEIHRLPRTTEEFLYPAMEDFAVDFVFDKGIHARCHRYRLNQFVLVGATTRVGLLSAPLRDRFGIFRKFDFYSRQDLARIVSRSAALMGLTIDETCTMELARRSRGTPRIVNRLLKRVRDYVQVRHGGVITVSAIDDALALEGVDEKGLTGLDRSYLETIIQYYGGGPVGIEAIGATLQEETDTLVDVVEPFLLAEGLLQRTSSGRKATEAAYRHLGVQWRG</sequence>
<comment type="function">
    <text evidence="1">The RuvA-RuvB-RuvC complex processes Holliday junction (HJ) DNA during genetic recombination and DNA repair, while the RuvA-RuvB complex plays an important role in the rescue of blocked DNA replication forks via replication fork reversal (RFR). RuvA specifically binds to HJ cruciform DNA, conferring on it an open structure. The RuvB hexamer acts as an ATP-dependent pump, pulling dsDNA into and through the RuvAB complex. RuvB forms 2 homohexamers on either side of HJ DNA bound by 1 or 2 RuvA tetramers; 4 subunits per hexamer contact DNA at a time. Coordinated motions by a converter formed by DNA-disengaged RuvB subunits stimulates ATP hydrolysis and nucleotide exchange. Immobilization of the converter enables RuvB to convert the ATP-contained energy into a lever motion, pulling 2 nucleotides of DNA out of the RuvA tetramer per ATP hydrolyzed, thus driving DNA branch migration. The RuvB motors rotate together with the DNA substrate, which together with the progressing nucleotide cycle form the mechanistic basis for DNA recombination by continuous HJ branch migration. Branch migration allows RuvC to scan DNA until it finds its consensus sequence, where it cleaves and resolves cruciform DNA.</text>
</comment>
<comment type="catalytic activity">
    <reaction evidence="1">
        <text>ATP + H2O = ADP + phosphate + H(+)</text>
        <dbReference type="Rhea" id="RHEA:13065"/>
        <dbReference type="ChEBI" id="CHEBI:15377"/>
        <dbReference type="ChEBI" id="CHEBI:15378"/>
        <dbReference type="ChEBI" id="CHEBI:30616"/>
        <dbReference type="ChEBI" id="CHEBI:43474"/>
        <dbReference type="ChEBI" id="CHEBI:456216"/>
    </reaction>
</comment>
<comment type="subunit">
    <text evidence="1">Homohexamer. Forms an RuvA(8)-RuvB(12)-Holliday junction (HJ) complex. HJ DNA is sandwiched between 2 RuvA tetramers; dsDNA enters through RuvA and exits via RuvB. An RuvB hexamer assembles on each DNA strand where it exits the tetramer. Each RuvB hexamer is contacted by two RuvA subunits (via domain III) on 2 adjacent RuvB subunits; this complex drives branch migration. In the full resolvosome a probable DNA-RuvA(4)-RuvB(12)-RuvC(2) complex forms which resolves the HJ.</text>
</comment>
<comment type="subcellular location">
    <subcellularLocation>
        <location evidence="1">Cytoplasm</location>
    </subcellularLocation>
</comment>
<comment type="domain">
    <text evidence="1">Has 3 domains, the large (RuvB-L) and small ATPase (RuvB-S) domains and the C-terminal head (RuvB-H) domain. The head domain binds DNA, while the ATPase domains jointly bind ATP, ADP or are empty depending on the state of the subunit in the translocation cycle. During a single DNA translocation step the structure of each domain remains the same, but their relative positions change.</text>
</comment>
<comment type="similarity">
    <text evidence="1">Belongs to the RuvB family.</text>
</comment>
<dbReference type="EC" id="3.6.4.-" evidence="1"/>
<dbReference type="EMBL" id="CP000859">
    <property type="protein sequence ID" value="ABW68009.1"/>
    <property type="molecule type" value="Genomic_DNA"/>
</dbReference>
<dbReference type="RefSeq" id="WP_012175621.1">
    <property type="nucleotide sequence ID" value="NC_009943.1"/>
</dbReference>
<dbReference type="SMR" id="A8ZUH7"/>
<dbReference type="STRING" id="96561.Dole_2205"/>
<dbReference type="KEGG" id="dol:Dole_2205"/>
<dbReference type="eggNOG" id="COG2255">
    <property type="taxonomic scope" value="Bacteria"/>
</dbReference>
<dbReference type="HOGENOM" id="CLU_055599_1_0_7"/>
<dbReference type="OrthoDB" id="9804478at2"/>
<dbReference type="Proteomes" id="UP000008561">
    <property type="component" value="Chromosome"/>
</dbReference>
<dbReference type="GO" id="GO:0005737">
    <property type="term" value="C:cytoplasm"/>
    <property type="evidence" value="ECO:0007669"/>
    <property type="project" value="UniProtKB-SubCell"/>
</dbReference>
<dbReference type="GO" id="GO:0048476">
    <property type="term" value="C:Holliday junction resolvase complex"/>
    <property type="evidence" value="ECO:0007669"/>
    <property type="project" value="UniProtKB-UniRule"/>
</dbReference>
<dbReference type="GO" id="GO:0005524">
    <property type="term" value="F:ATP binding"/>
    <property type="evidence" value="ECO:0007669"/>
    <property type="project" value="UniProtKB-UniRule"/>
</dbReference>
<dbReference type="GO" id="GO:0016887">
    <property type="term" value="F:ATP hydrolysis activity"/>
    <property type="evidence" value="ECO:0007669"/>
    <property type="project" value="InterPro"/>
</dbReference>
<dbReference type="GO" id="GO:0000400">
    <property type="term" value="F:four-way junction DNA binding"/>
    <property type="evidence" value="ECO:0007669"/>
    <property type="project" value="UniProtKB-UniRule"/>
</dbReference>
<dbReference type="GO" id="GO:0009378">
    <property type="term" value="F:four-way junction helicase activity"/>
    <property type="evidence" value="ECO:0007669"/>
    <property type="project" value="InterPro"/>
</dbReference>
<dbReference type="GO" id="GO:0006310">
    <property type="term" value="P:DNA recombination"/>
    <property type="evidence" value="ECO:0007669"/>
    <property type="project" value="UniProtKB-UniRule"/>
</dbReference>
<dbReference type="GO" id="GO:0006281">
    <property type="term" value="P:DNA repair"/>
    <property type="evidence" value="ECO:0007669"/>
    <property type="project" value="UniProtKB-UniRule"/>
</dbReference>
<dbReference type="CDD" id="cd00009">
    <property type="entry name" value="AAA"/>
    <property type="match status" value="1"/>
</dbReference>
<dbReference type="Gene3D" id="1.10.8.60">
    <property type="match status" value="1"/>
</dbReference>
<dbReference type="Gene3D" id="3.40.50.300">
    <property type="entry name" value="P-loop containing nucleotide triphosphate hydrolases"/>
    <property type="match status" value="1"/>
</dbReference>
<dbReference type="Gene3D" id="1.10.10.10">
    <property type="entry name" value="Winged helix-like DNA-binding domain superfamily/Winged helix DNA-binding domain"/>
    <property type="match status" value="1"/>
</dbReference>
<dbReference type="HAMAP" id="MF_00016">
    <property type="entry name" value="DNA_HJ_migration_RuvB"/>
    <property type="match status" value="1"/>
</dbReference>
<dbReference type="InterPro" id="IPR003593">
    <property type="entry name" value="AAA+_ATPase"/>
</dbReference>
<dbReference type="InterPro" id="IPR041445">
    <property type="entry name" value="AAA_lid_4"/>
</dbReference>
<dbReference type="InterPro" id="IPR004605">
    <property type="entry name" value="DNA_helicase_Holl-junc_RuvB"/>
</dbReference>
<dbReference type="InterPro" id="IPR027417">
    <property type="entry name" value="P-loop_NTPase"/>
</dbReference>
<dbReference type="InterPro" id="IPR008824">
    <property type="entry name" value="RuvB-like_N"/>
</dbReference>
<dbReference type="InterPro" id="IPR008823">
    <property type="entry name" value="RuvB_C"/>
</dbReference>
<dbReference type="InterPro" id="IPR036388">
    <property type="entry name" value="WH-like_DNA-bd_sf"/>
</dbReference>
<dbReference type="InterPro" id="IPR036390">
    <property type="entry name" value="WH_DNA-bd_sf"/>
</dbReference>
<dbReference type="NCBIfam" id="NF000868">
    <property type="entry name" value="PRK00080.1"/>
    <property type="match status" value="1"/>
</dbReference>
<dbReference type="NCBIfam" id="TIGR00635">
    <property type="entry name" value="ruvB"/>
    <property type="match status" value="1"/>
</dbReference>
<dbReference type="PANTHER" id="PTHR42848">
    <property type="match status" value="1"/>
</dbReference>
<dbReference type="PANTHER" id="PTHR42848:SF1">
    <property type="entry name" value="HOLLIDAY JUNCTION BRANCH MIGRATION COMPLEX SUBUNIT RUVB"/>
    <property type="match status" value="1"/>
</dbReference>
<dbReference type="Pfam" id="PF17864">
    <property type="entry name" value="AAA_lid_4"/>
    <property type="match status" value="1"/>
</dbReference>
<dbReference type="Pfam" id="PF05491">
    <property type="entry name" value="RuvB_C"/>
    <property type="match status" value="1"/>
</dbReference>
<dbReference type="Pfam" id="PF05496">
    <property type="entry name" value="RuvB_N"/>
    <property type="match status" value="1"/>
</dbReference>
<dbReference type="SMART" id="SM00382">
    <property type="entry name" value="AAA"/>
    <property type="match status" value="1"/>
</dbReference>
<dbReference type="SUPFAM" id="SSF52540">
    <property type="entry name" value="P-loop containing nucleoside triphosphate hydrolases"/>
    <property type="match status" value="1"/>
</dbReference>
<dbReference type="SUPFAM" id="SSF46785">
    <property type="entry name" value="Winged helix' DNA-binding domain"/>
    <property type="match status" value="1"/>
</dbReference>
<gene>
    <name evidence="1" type="primary">ruvB</name>
    <name type="ordered locus">Dole_2205</name>
</gene>
<proteinExistence type="inferred from homology"/>
<feature type="chain" id="PRO_1000201832" description="Holliday junction branch migration complex subunit RuvB">
    <location>
        <begin position="1"/>
        <end position="343"/>
    </location>
</feature>
<feature type="region of interest" description="Disordered" evidence="2">
    <location>
        <begin position="1"/>
        <end position="26"/>
    </location>
</feature>
<feature type="region of interest" description="Large ATPase domain (RuvB-L)" evidence="1">
    <location>
        <begin position="3"/>
        <end position="193"/>
    </location>
</feature>
<feature type="region of interest" description="Small ATPAse domain (RuvB-S)" evidence="1">
    <location>
        <begin position="194"/>
        <end position="264"/>
    </location>
</feature>
<feature type="region of interest" description="Head domain (RuvB-H)" evidence="1">
    <location>
        <begin position="267"/>
        <end position="343"/>
    </location>
</feature>
<feature type="compositionally biased region" description="Polar residues" evidence="2">
    <location>
        <begin position="7"/>
        <end position="16"/>
    </location>
</feature>
<feature type="binding site" evidence="1">
    <location>
        <position position="32"/>
    </location>
    <ligand>
        <name>ATP</name>
        <dbReference type="ChEBI" id="CHEBI:30616"/>
    </ligand>
</feature>
<feature type="binding site" evidence="1">
    <location>
        <position position="33"/>
    </location>
    <ligand>
        <name>ATP</name>
        <dbReference type="ChEBI" id="CHEBI:30616"/>
    </ligand>
</feature>
<feature type="binding site" evidence="1">
    <location>
        <position position="74"/>
    </location>
    <ligand>
        <name>ATP</name>
        <dbReference type="ChEBI" id="CHEBI:30616"/>
    </ligand>
</feature>
<feature type="binding site" evidence="1">
    <location>
        <position position="77"/>
    </location>
    <ligand>
        <name>ATP</name>
        <dbReference type="ChEBI" id="CHEBI:30616"/>
    </ligand>
</feature>
<feature type="binding site" evidence="1">
    <location>
        <position position="78"/>
    </location>
    <ligand>
        <name>ATP</name>
        <dbReference type="ChEBI" id="CHEBI:30616"/>
    </ligand>
</feature>
<feature type="binding site" evidence="1">
    <location>
        <position position="78"/>
    </location>
    <ligand>
        <name>Mg(2+)</name>
        <dbReference type="ChEBI" id="CHEBI:18420"/>
    </ligand>
</feature>
<feature type="binding site" evidence="1">
    <location>
        <position position="79"/>
    </location>
    <ligand>
        <name>ATP</name>
        <dbReference type="ChEBI" id="CHEBI:30616"/>
    </ligand>
</feature>
<feature type="binding site" evidence="1">
    <location>
        <begin position="140"/>
        <end position="142"/>
    </location>
    <ligand>
        <name>ATP</name>
        <dbReference type="ChEBI" id="CHEBI:30616"/>
    </ligand>
</feature>
<feature type="binding site" evidence="1">
    <location>
        <position position="183"/>
    </location>
    <ligand>
        <name>ATP</name>
        <dbReference type="ChEBI" id="CHEBI:30616"/>
    </ligand>
</feature>
<feature type="binding site" evidence="1">
    <location>
        <position position="193"/>
    </location>
    <ligand>
        <name>ATP</name>
        <dbReference type="ChEBI" id="CHEBI:30616"/>
    </ligand>
</feature>
<feature type="binding site" evidence="1">
    <location>
        <position position="230"/>
    </location>
    <ligand>
        <name>ATP</name>
        <dbReference type="ChEBI" id="CHEBI:30616"/>
    </ligand>
</feature>
<feature type="binding site" evidence="1">
    <location>
        <position position="322"/>
    </location>
    <ligand>
        <name>DNA</name>
        <dbReference type="ChEBI" id="CHEBI:16991"/>
    </ligand>
</feature>
<feature type="binding site" evidence="1">
    <location>
        <position position="327"/>
    </location>
    <ligand>
        <name>DNA</name>
        <dbReference type="ChEBI" id="CHEBI:16991"/>
    </ligand>
</feature>
<protein>
    <recommendedName>
        <fullName evidence="1">Holliday junction branch migration complex subunit RuvB</fullName>
        <ecNumber evidence="1">3.6.4.-</ecNumber>
    </recommendedName>
</protein>
<name>RUVB_DESOH</name>
<accession>A8ZUH7</accession>